<accession>A4X422</accession>
<keyword id="KW-0050">Antiport</keyword>
<keyword id="KW-1003">Cell membrane</keyword>
<keyword id="KW-0406">Ion transport</keyword>
<keyword id="KW-0472">Membrane</keyword>
<keyword id="KW-1185">Reference proteome</keyword>
<keyword id="KW-0915">Sodium</keyword>
<keyword id="KW-0739">Sodium transport</keyword>
<keyword id="KW-0812">Transmembrane</keyword>
<keyword id="KW-1133">Transmembrane helix</keyword>
<keyword id="KW-0813">Transport</keyword>
<organism>
    <name type="scientific">Salinispora tropica (strain ATCC BAA-916 / DSM 44818 / JCM 13857 / NBRC 105044 / CNB-440)</name>
    <dbReference type="NCBI Taxonomy" id="369723"/>
    <lineage>
        <taxon>Bacteria</taxon>
        <taxon>Bacillati</taxon>
        <taxon>Actinomycetota</taxon>
        <taxon>Actinomycetes</taxon>
        <taxon>Micromonosporales</taxon>
        <taxon>Micromonosporaceae</taxon>
        <taxon>Salinispora</taxon>
    </lineage>
</organism>
<evidence type="ECO:0000255" key="1">
    <source>
        <dbReference type="HAMAP-Rule" id="MF_01844"/>
    </source>
</evidence>
<evidence type="ECO:0000256" key="2">
    <source>
        <dbReference type="SAM" id="MobiDB-lite"/>
    </source>
</evidence>
<reference key="1">
    <citation type="journal article" date="2007" name="Proc. Natl. Acad. Sci. U.S.A.">
        <title>Genome sequencing reveals complex secondary metabolome in the marine actinomycete Salinispora tropica.</title>
        <authorList>
            <person name="Udwary D.W."/>
            <person name="Zeigler L."/>
            <person name="Asolkar R.N."/>
            <person name="Singan V."/>
            <person name="Lapidus A."/>
            <person name="Fenical W."/>
            <person name="Jensen P.R."/>
            <person name="Moore B.S."/>
        </authorList>
    </citation>
    <scope>NUCLEOTIDE SEQUENCE [LARGE SCALE GENOMIC DNA]</scope>
    <source>
        <strain>ATCC BAA-916 / DSM 44818 / JCM 13857 / NBRC 105044 / CNB-440</strain>
    </source>
</reference>
<dbReference type="EMBL" id="CP000667">
    <property type="protein sequence ID" value="ABP53622.1"/>
    <property type="molecule type" value="Genomic_DNA"/>
</dbReference>
<dbReference type="RefSeq" id="WP_011905054.1">
    <property type="nucleotide sequence ID" value="NC_009380.1"/>
</dbReference>
<dbReference type="SMR" id="A4X422"/>
<dbReference type="STRING" id="369723.Strop_1152"/>
<dbReference type="KEGG" id="stp:Strop_1152"/>
<dbReference type="PATRIC" id="fig|369723.5.peg.1174"/>
<dbReference type="eggNOG" id="COG3004">
    <property type="taxonomic scope" value="Bacteria"/>
</dbReference>
<dbReference type="HOGENOM" id="CLU_015803_0_0_11"/>
<dbReference type="Proteomes" id="UP000000235">
    <property type="component" value="Chromosome"/>
</dbReference>
<dbReference type="GO" id="GO:0005886">
    <property type="term" value="C:plasma membrane"/>
    <property type="evidence" value="ECO:0007669"/>
    <property type="project" value="UniProtKB-SubCell"/>
</dbReference>
<dbReference type="GO" id="GO:0015385">
    <property type="term" value="F:sodium:proton antiporter activity"/>
    <property type="evidence" value="ECO:0007669"/>
    <property type="project" value="TreeGrafter"/>
</dbReference>
<dbReference type="GO" id="GO:0006885">
    <property type="term" value="P:regulation of pH"/>
    <property type="evidence" value="ECO:0007669"/>
    <property type="project" value="InterPro"/>
</dbReference>
<dbReference type="Gene3D" id="1.20.1530.10">
    <property type="entry name" value="Na+/H+ antiporter like domain"/>
    <property type="match status" value="1"/>
</dbReference>
<dbReference type="HAMAP" id="MF_01844">
    <property type="entry name" value="NhaA"/>
    <property type="match status" value="1"/>
</dbReference>
<dbReference type="InterPro" id="IPR023171">
    <property type="entry name" value="Na/H_antiporter_dom_sf"/>
</dbReference>
<dbReference type="InterPro" id="IPR004670">
    <property type="entry name" value="NhaA"/>
</dbReference>
<dbReference type="NCBIfam" id="TIGR00773">
    <property type="entry name" value="NhaA"/>
    <property type="match status" value="1"/>
</dbReference>
<dbReference type="PANTHER" id="PTHR30341:SF0">
    <property type="entry name" value="NA(+)_H(+) ANTIPORTER NHAA"/>
    <property type="match status" value="1"/>
</dbReference>
<dbReference type="PANTHER" id="PTHR30341">
    <property type="entry name" value="SODIUM ION/PROTON ANTIPORTER NHAA-RELATED"/>
    <property type="match status" value="1"/>
</dbReference>
<dbReference type="Pfam" id="PF06965">
    <property type="entry name" value="Na_H_antiport_1"/>
    <property type="match status" value="1"/>
</dbReference>
<protein>
    <recommendedName>
        <fullName evidence="1">Na(+)/H(+) antiporter NhaA 2</fullName>
    </recommendedName>
    <alternativeName>
        <fullName evidence="1">Sodium/proton antiporter NhaA 2</fullName>
    </alternativeName>
</protein>
<gene>
    <name evidence="1" type="primary">nhaA2</name>
    <name type="ordered locus">Strop_1152</name>
</gene>
<name>NHAA2_SALTO</name>
<feature type="chain" id="PRO_0000334411" description="Na(+)/H(+) antiporter NhaA 2">
    <location>
        <begin position="1"/>
        <end position="453"/>
    </location>
</feature>
<feature type="transmembrane region" description="Helical" evidence="1">
    <location>
        <begin position="32"/>
        <end position="52"/>
    </location>
</feature>
<feature type="transmembrane region" description="Helical" evidence="1">
    <location>
        <begin position="71"/>
        <end position="91"/>
    </location>
</feature>
<feature type="transmembrane region" description="Helical" evidence="1">
    <location>
        <begin position="109"/>
        <end position="129"/>
    </location>
</feature>
<feature type="transmembrane region" description="Helical" evidence="1">
    <location>
        <begin position="140"/>
        <end position="160"/>
    </location>
</feature>
<feature type="transmembrane region" description="Helical" evidence="1">
    <location>
        <begin position="169"/>
        <end position="189"/>
    </location>
</feature>
<feature type="transmembrane region" description="Helical" evidence="1">
    <location>
        <begin position="193"/>
        <end position="213"/>
    </location>
</feature>
<feature type="transmembrane region" description="Helical" evidence="1">
    <location>
        <begin position="232"/>
        <end position="252"/>
    </location>
</feature>
<feature type="transmembrane region" description="Helical" evidence="1">
    <location>
        <begin position="284"/>
        <end position="304"/>
    </location>
</feature>
<feature type="transmembrane region" description="Helical" evidence="1">
    <location>
        <begin position="310"/>
        <end position="330"/>
    </location>
</feature>
<feature type="transmembrane region" description="Helical" evidence="1">
    <location>
        <begin position="356"/>
        <end position="376"/>
    </location>
</feature>
<feature type="transmembrane region" description="Helical" evidence="1">
    <location>
        <begin position="382"/>
        <end position="402"/>
    </location>
</feature>
<feature type="region of interest" description="Disordered" evidence="2">
    <location>
        <begin position="409"/>
        <end position="453"/>
    </location>
</feature>
<comment type="function">
    <text evidence="1">Na(+)/H(+) antiporter that extrudes sodium in exchange for external protons.</text>
</comment>
<comment type="catalytic activity">
    <reaction evidence="1">
        <text>Na(+)(in) + 2 H(+)(out) = Na(+)(out) + 2 H(+)(in)</text>
        <dbReference type="Rhea" id="RHEA:29251"/>
        <dbReference type="ChEBI" id="CHEBI:15378"/>
        <dbReference type="ChEBI" id="CHEBI:29101"/>
    </reaction>
    <physiologicalReaction direction="left-to-right" evidence="1">
        <dbReference type="Rhea" id="RHEA:29252"/>
    </physiologicalReaction>
</comment>
<comment type="subcellular location">
    <subcellularLocation>
        <location evidence="1">Cell membrane</location>
        <topology evidence="1">Multi-pass membrane protein</topology>
    </subcellularLocation>
</comment>
<comment type="similarity">
    <text evidence="1">Belongs to the NhaA Na(+)/H(+) (TC 2.A.33) antiporter family.</text>
</comment>
<proteinExistence type="inferred from homology"/>
<sequence>MDATRRDLPPGSVVRRRTDRIADVLRAETTGGALLLAGAVIALIWANSPGAAGYDAMRSFTVGPAWLHLDLSLAAWAKDGLLAVFFFVAGLELKREFVTGELRQPRRAAVPIAAAVGGVLAPAAVYVLITAAAEADALRGWAIPAATDIAFALAVLAVIGRHLPPAVRVFLLTLAVVDDLIAIMIIAVFYTANLSVTPLLATALPLVAFAILLRRRVTSVWLLLPLALTTWALVHASGVHATVAGVLLALVVPARPHSQHEHTAAPSLLERFEHAIKPVSAGLAVPVFALMSAGVAIGGLGGLVSALTDPVAIGVIAGLVIGKPLGVIAVTWLVTRLTRTGLGNNLTWTHITGLSMLAGIGFTVSLLIGELSFAAGTERHDHVKIAIVTGSLIAAVLAAVILRLPNRAGSRGNDATTRDPDQTRVGTATQRTTPDHPTPAATDANQPARSPAP</sequence>